<comment type="function">
    <text evidence="1">Plays an essential role in early steps of chloroplast development. Involved in the regulation of plastid gene expression. Required for the proper function of the plastid transcriptional machinery and protein accumulation in thylakoid membranes. May function as molecular chaperone to ensure proper organization of the nucleoids in chloroplasts.</text>
</comment>
<comment type="subcellular location">
    <subcellularLocation>
        <location evidence="1">Plastid</location>
        <location evidence="1">Chloroplast stroma</location>
    </subcellularLocation>
</comment>
<comment type="sequence caution" evidence="4">
    <conflict type="erroneous gene model prediction">
        <sequence resource="EMBL-CDS" id="AAT77387"/>
    </conflict>
</comment>
<comment type="sequence caution" evidence="4">
    <conflict type="erroneous gene model prediction">
        <sequence resource="EMBL-CDS" id="AAU10783"/>
    </conflict>
</comment>
<comment type="sequence caution" evidence="4">
    <conflict type="frameshift">
        <sequence resource="EMBL-CDS" id="BAG92767"/>
    </conflict>
</comment>
<dbReference type="EMBL" id="AC134933">
    <property type="protein sequence ID" value="AAU10783.1"/>
    <property type="status" value="ALT_SEQ"/>
    <property type="molecule type" value="Genomic_DNA"/>
</dbReference>
<dbReference type="EMBL" id="AC137617">
    <property type="protein sequence ID" value="AAT77387.1"/>
    <property type="status" value="ALT_SEQ"/>
    <property type="molecule type" value="Genomic_DNA"/>
</dbReference>
<dbReference type="EMBL" id="AP008211">
    <property type="protein sequence ID" value="BAF17475.1"/>
    <property type="molecule type" value="Genomic_DNA"/>
</dbReference>
<dbReference type="EMBL" id="AP014961">
    <property type="protein sequence ID" value="BAS94046.1"/>
    <property type="molecule type" value="Genomic_DNA"/>
</dbReference>
<dbReference type="EMBL" id="CM000142">
    <property type="protein sequence ID" value="EEE63743.1"/>
    <property type="molecule type" value="Genomic_DNA"/>
</dbReference>
<dbReference type="EMBL" id="AK071955">
    <property type="protein sequence ID" value="BAG92767.1"/>
    <property type="status" value="ALT_FRAME"/>
    <property type="molecule type" value="mRNA"/>
</dbReference>
<dbReference type="RefSeq" id="XP_015640074.1">
    <property type="nucleotide sequence ID" value="XM_015784588.1"/>
</dbReference>
<dbReference type="SMR" id="Q0DI48"/>
<dbReference type="FunCoup" id="Q0DI48">
    <property type="interactions" value="1309"/>
</dbReference>
<dbReference type="PaxDb" id="39947-Q0DI48"/>
<dbReference type="EnsemblPlants" id="Os05t0417200-01">
    <property type="protein sequence ID" value="Os05t0417200-01"/>
    <property type="gene ID" value="Os05g0417200"/>
</dbReference>
<dbReference type="Gramene" id="Os05t0417200-01">
    <property type="protein sequence ID" value="Os05t0417200-01"/>
    <property type="gene ID" value="Os05g0417200"/>
</dbReference>
<dbReference type="KEGG" id="dosa:Os05g0417200"/>
<dbReference type="eggNOG" id="ENOG502QPQP">
    <property type="taxonomic scope" value="Eukaryota"/>
</dbReference>
<dbReference type="HOGENOM" id="CLU_072426_0_0_1"/>
<dbReference type="InParanoid" id="Q0DI48"/>
<dbReference type="OMA" id="IHIIWNC"/>
<dbReference type="OrthoDB" id="655699at2759"/>
<dbReference type="Proteomes" id="UP000000763">
    <property type="component" value="Chromosome 5"/>
</dbReference>
<dbReference type="Proteomes" id="UP000007752">
    <property type="component" value="Chromosome 5"/>
</dbReference>
<dbReference type="Proteomes" id="UP000059680">
    <property type="component" value="Chromosome 5"/>
</dbReference>
<dbReference type="GO" id="GO:0009570">
    <property type="term" value="C:chloroplast stroma"/>
    <property type="evidence" value="ECO:0000318"/>
    <property type="project" value="GO_Central"/>
</dbReference>
<dbReference type="GO" id="GO:0009658">
    <property type="term" value="P:chloroplast organization"/>
    <property type="evidence" value="ECO:0000318"/>
    <property type="project" value="GO_Central"/>
</dbReference>
<dbReference type="GO" id="GO:0006355">
    <property type="term" value="P:regulation of DNA-templated transcription"/>
    <property type="evidence" value="ECO:0000318"/>
    <property type="project" value="GO_Central"/>
</dbReference>
<dbReference type="InterPro" id="IPR044701">
    <property type="entry name" value="MRL7/MRL7L"/>
</dbReference>
<dbReference type="PANTHER" id="PTHR34669">
    <property type="entry name" value="THIOREDOXIN-LIKE FOLD DOMAIN-CONTAINING PROTEIN MRL7L, CHLOROPLASTIC"/>
    <property type="match status" value="1"/>
</dbReference>
<dbReference type="PANTHER" id="PTHR34669:SF1">
    <property type="entry name" value="THIOREDOXIN-LIKE FOLD DOMAIN-CONTAINING PROTEIN MRL7L, CHLOROPLASTIC"/>
    <property type="match status" value="1"/>
</dbReference>
<keyword id="KW-0150">Chloroplast</keyword>
<keyword id="KW-0934">Plastid</keyword>
<keyword id="KW-1185">Reference proteome</keyword>
<keyword id="KW-0809">Transit peptide</keyword>
<feature type="transit peptide" description="Chloroplast" evidence="2">
    <location>
        <begin position="1"/>
        <end position="46"/>
    </location>
</feature>
<feature type="chain" id="PRO_0000439383" description="Thioredoxin-like fold domain-containing protein MRL7L homolog, chloroplastic" evidence="2">
    <location>
        <begin position="47"/>
        <end position="329"/>
    </location>
</feature>
<feature type="region of interest" description="Disordered" evidence="3">
    <location>
        <begin position="58"/>
        <end position="91"/>
    </location>
</feature>
<feature type="compositionally biased region" description="Acidic residues" evidence="3">
    <location>
        <begin position="72"/>
        <end position="85"/>
    </location>
</feature>
<evidence type="ECO:0000250" key="1">
    <source>
        <dbReference type="UniProtKB" id="Q9SKB6"/>
    </source>
</evidence>
<evidence type="ECO:0000255" key="2"/>
<evidence type="ECO:0000256" key="3">
    <source>
        <dbReference type="SAM" id="MobiDB-lite"/>
    </source>
</evidence>
<evidence type="ECO:0000305" key="4"/>
<evidence type="ECO:0000312" key="5">
    <source>
        <dbReference type="EMBL" id="AAT77387.1"/>
    </source>
</evidence>
<evidence type="ECO:0000312" key="6">
    <source>
        <dbReference type="EMBL" id="AAU10783.1"/>
    </source>
</evidence>
<evidence type="ECO:0000312" key="7">
    <source>
        <dbReference type="EMBL" id="BAF17475.1"/>
    </source>
</evidence>
<evidence type="ECO:0000312" key="8">
    <source>
        <dbReference type="EMBL" id="EEE63743.1"/>
    </source>
</evidence>
<reference key="1">
    <citation type="journal article" date="2005" name="Mol. Genet. Genomics">
        <title>A fine physical map of the rice chromosome 5.</title>
        <authorList>
            <person name="Cheng C.-H."/>
            <person name="Chung M.C."/>
            <person name="Liu S.-M."/>
            <person name="Chen S.-K."/>
            <person name="Kao F.Y."/>
            <person name="Lin S.-J."/>
            <person name="Hsiao S.-H."/>
            <person name="Tseng I.C."/>
            <person name="Hsing Y.-I.C."/>
            <person name="Wu H.-P."/>
            <person name="Chen C.-S."/>
            <person name="Shaw J.-F."/>
            <person name="Wu J."/>
            <person name="Matsumoto T."/>
            <person name="Sasaki T."/>
            <person name="Chen H.-C."/>
            <person name="Chow T.-Y."/>
        </authorList>
    </citation>
    <scope>NUCLEOTIDE SEQUENCE [LARGE SCALE GENOMIC DNA]</scope>
    <source>
        <strain>cv. Nipponbare</strain>
    </source>
</reference>
<reference key="2">
    <citation type="journal article" date="2005" name="Nature">
        <title>The map-based sequence of the rice genome.</title>
        <authorList>
            <consortium name="International rice genome sequencing project (IRGSP)"/>
        </authorList>
    </citation>
    <scope>NUCLEOTIDE SEQUENCE [LARGE SCALE GENOMIC DNA]</scope>
    <source>
        <strain>cv. Nipponbare</strain>
    </source>
</reference>
<reference key="3">
    <citation type="journal article" date="2008" name="Nucleic Acids Res.">
        <title>The rice annotation project database (RAP-DB): 2008 update.</title>
        <authorList>
            <consortium name="The rice annotation project (RAP)"/>
        </authorList>
    </citation>
    <scope>GENOME REANNOTATION</scope>
    <source>
        <strain>cv. Nipponbare</strain>
    </source>
</reference>
<reference key="4">
    <citation type="journal article" date="2013" name="Rice">
        <title>Improvement of the Oryza sativa Nipponbare reference genome using next generation sequence and optical map data.</title>
        <authorList>
            <person name="Kawahara Y."/>
            <person name="de la Bastide M."/>
            <person name="Hamilton J.P."/>
            <person name="Kanamori H."/>
            <person name="McCombie W.R."/>
            <person name="Ouyang S."/>
            <person name="Schwartz D.C."/>
            <person name="Tanaka T."/>
            <person name="Wu J."/>
            <person name="Zhou S."/>
            <person name="Childs K.L."/>
            <person name="Davidson R.M."/>
            <person name="Lin H."/>
            <person name="Quesada-Ocampo L."/>
            <person name="Vaillancourt B."/>
            <person name="Sakai H."/>
            <person name="Lee S.S."/>
            <person name="Kim J."/>
            <person name="Numa H."/>
            <person name="Itoh T."/>
            <person name="Buell C.R."/>
            <person name="Matsumoto T."/>
        </authorList>
    </citation>
    <scope>GENOME REANNOTATION</scope>
    <source>
        <strain>cv. Nipponbare</strain>
    </source>
</reference>
<reference key="5">
    <citation type="journal article" date="2005" name="PLoS Biol.">
        <title>The genomes of Oryza sativa: a history of duplications.</title>
        <authorList>
            <person name="Yu J."/>
            <person name="Wang J."/>
            <person name="Lin W."/>
            <person name="Li S."/>
            <person name="Li H."/>
            <person name="Zhou J."/>
            <person name="Ni P."/>
            <person name="Dong W."/>
            <person name="Hu S."/>
            <person name="Zeng C."/>
            <person name="Zhang J."/>
            <person name="Zhang Y."/>
            <person name="Li R."/>
            <person name="Xu Z."/>
            <person name="Li S."/>
            <person name="Li X."/>
            <person name="Zheng H."/>
            <person name="Cong L."/>
            <person name="Lin L."/>
            <person name="Yin J."/>
            <person name="Geng J."/>
            <person name="Li G."/>
            <person name="Shi J."/>
            <person name="Liu J."/>
            <person name="Lv H."/>
            <person name="Li J."/>
            <person name="Wang J."/>
            <person name="Deng Y."/>
            <person name="Ran L."/>
            <person name="Shi X."/>
            <person name="Wang X."/>
            <person name="Wu Q."/>
            <person name="Li C."/>
            <person name="Ren X."/>
            <person name="Wang J."/>
            <person name="Wang X."/>
            <person name="Li D."/>
            <person name="Liu D."/>
            <person name="Zhang X."/>
            <person name="Ji Z."/>
            <person name="Zhao W."/>
            <person name="Sun Y."/>
            <person name="Zhang Z."/>
            <person name="Bao J."/>
            <person name="Han Y."/>
            <person name="Dong L."/>
            <person name="Ji J."/>
            <person name="Chen P."/>
            <person name="Wu S."/>
            <person name="Liu J."/>
            <person name="Xiao Y."/>
            <person name="Bu D."/>
            <person name="Tan J."/>
            <person name="Yang L."/>
            <person name="Ye C."/>
            <person name="Zhang J."/>
            <person name="Xu J."/>
            <person name="Zhou Y."/>
            <person name="Yu Y."/>
            <person name="Zhang B."/>
            <person name="Zhuang S."/>
            <person name="Wei H."/>
            <person name="Liu B."/>
            <person name="Lei M."/>
            <person name="Yu H."/>
            <person name="Li Y."/>
            <person name="Xu H."/>
            <person name="Wei S."/>
            <person name="He X."/>
            <person name="Fang L."/>
            <person name="Zhang Z."/>
            <person name="Zhang Y."/>
            <person name="Huang X."/>
            <person name="Su Z."/>
            <person name="Tong W."/>
            <person name="Li J."/>
            <person name="Tong Z."/>
            <person name="Li S."/>
            <person name="Ye J."/>
            <person name="Wang L."/>
            <person name="Fang L."/>
            <person name="Lei T."/>
            <person name="Chen C.-S."/>
            <person name="Chen H.-C."/>
            <person name="Xu Z."/>
            <person name="Li H."/>
            <person name="Huang H."/>
            <person name="Zhang F."/>
            <person name="Xu H."/>
            <person name="Li N."/>
            <person name="Zhao C."/>
            <person name="Li S."/>
            <person name="Dong L."/>
            <person name="Huang Y."/>
            <person name="Li L."/>
            <person name="Xi Y."/>
            <person name="Qi Q."/>
            <person name="Li W."/>
            <person name="Zhang B."/>
            <person name="Hu W."/>
            <person name="Zhang Y."/>
            <person name="Tian X."/>
            <person name="Jiao Y."/>
            <person name="Liang X."/>
            <person name="Jin J."/>
            <person name="Gao L."/>
            <person name="Zheng W."/>
            <person name="Hao B."/>
            <person name="Liu S.-M."/>
            <person name="Wang W."/>
            <person name="Yuan L."/>
            <person name="Cao M."/>
            <person name="McDermott J."/>
            <person name="Samudrala R."/>
            <person name="Wang J."/>
            <person name="Wong G.K.-S."/>
            <person name="Yang H."/>
        </authorList>
    </citation>
    <scope>NUCLEOTIDE SEQUENCE [LARGE SCALE GENOMIC DNA]</scope>
    <source>
        <strain>cv. Nipponbare</strain>
    </source>
</reference>
<reference key="6">
    <citation type="journal article" date="2003" name="Science">
        <title>Collection, mapping, and annotation of over 28,000 cDNA clones from japonica rice.</title>
        <authorList>
            <consortium name="The rice full-length cDNA consortium"/>
        </authorList>
    </citation>
    <scope>NUCLEOTIDE SEQUENCE [LARGE SCALE MRNA]</scope>
    <source>
        <strain>cv. Nipponbare</strain>
    </source>
</reference>
<sequence>MALQSCCSSSASVPATCSALCLAEATRAASLFVRPRAAARRLVLARCARGREGGESKAVQLVLGGRARDDGSESESSDDEDDDEPMQMTDEQRRTLRRKIREMMDRVPETAEITDPAERKAKMLELLTKYQLVVEEEDPNWPEDDEDGHGFSLGQFFDKITIKAEKKNDDDEEDDAKGNQSDKEIVWEDDNYIKPIRDVKTMDWDDTVFTDFGPLIVLVHNRYKRPQDNENARDQLVKAIEMFWEYNLPSPRCVAVDACAEPDLVKALNVSGFPEVLFTNAGKIVHRDKVVRSAEEWTRMMAFFYYKAARPPCLSEADGQGQEKVPLMS</sequence>
<gene>
    <name evidence="4" type="primary">MRL7L</name>
    <name evidence="7" type="ordered locus">Os05g0417200</name>
    <name evidence="4" type="ordered locus">LOC_Os05g34470</name>
    <name evidence="8" type="ORF">OsJ_18562</name>
    <name evidence="5" type="ORF">OSJNBa0084P24.17</name>
    <name evidence="6" type="ORF">P0579A05.3</name>
</gene>
<proteinExistence type="evidence at transcript level"/>
<name>MRL7L_ORYSJ</name>
<accession>Q0DI48</accession>
<accession>Q688K6</accession>
<accession>Q6AT71</accession>
<organism>
    <name type="scientific">Oryza sativa subsp. japonica</name>
    <name type="common">Rice</name>
    <dbReference type="NCBI Taxonomy" id="39947"/>
    <lineage>
        <taxon>Eukaryota</taxon>
        <taxon>Viridiplantae</taxon>
        <taxon>Streptophyta</taxon>
        <taxon>Embryophyta</taxon>
        <taxon>Tracheophyta</taxon>
        <taxon>Spermatophyta</taxon>
        <taxon>Magnoliopsida</taxon>
        <taxon>Liliopsida</taxon>
        <taxon>Poales</taxon>
        <taxon>Poaceae</taxon>
        <taxon>BOP clade</taxon>
        <taxon>Oryzoideae</taxon>
        <taxon>Oryzeae</taxon>
        <taxon>Oryzinae</taxon>
        <taxon>Oryza</taxon>
        <taxon>Oryza sativa</taxon>
    </lineage>
</organism>
<protein>
    <recommendedName>
        <fullName evidence="4">Thioredoxin-like fold domain-containing protein MRL7L homolog, chloroplastic</fullName>
        <shortName evidence="4">OsMRL7-L</shortName>
    </recommendedName>
</protein>